<comment type="function">
    <molecule>Outer capsid protein VP4</molecule>
    <text evidence="1">Spike-forming protein that mediates virion attachment to the host epithelial cell receptors and plays a major role in cell penetration, determination of host range restriction and virulence. Rotavirus attachment and entry into the host cell probably involves multiple sequential contacts between the outer capsid proteins VP4 and VP7, and the cell receptors. It is subsequently lost, together with VP7, following virus entry into the host cell. Following entry into the host cell, low intracellular or intravesicular Ca(2+) concentration probably causes the calcium-stabilized VP7 trimers to dissociate from the virion. This step is probably necessary for the membrane-disrupting entry step and the release of VP4, which is locked onto the virion by VP7. During the virus exit from the host cell, VP4 seems to be required to target the newly formed virions to the host cell lipid rafts.</text>
</comment>
<comment type="function">
    <molecule>Outer capsid protein VP5*</molecule>
    <text evidence="1">Forms the spike 'foot' and 'body' and acts as a membrane permeabilization protein that mediates release of viral particles from endosomal compartments into the cytoplasm. During entry, the part of VP5* that protrudes from the virus folds back on itself and reorganizes from a local dimer to a trimer. This reorganization may be linked to membrane penetration by exposing VP5* hydrophobic region. In integrin-dependent strains, VP5* targets the integrin heterodimer ITGA2/ITGB1 for cell attachment.</text>
</comment>
<comment type="function">
    <molecule>Outer capsid protein VP8*</molecule>
    <text evidence="1">Forms the head of the spikes and mediates the recognition of specific host cell surface glycans. It is the viral hemagglutinin and an important target of neutralizing antibodies. In sialic acid-dependent strains, VP8* binds to host cell sialic acid, most probably a ganglioside, providing the initial contact. In some other strains, VP8* mediates the attachment to histo-blood group antigens (HBGAs) for viral entry.</text>
</comment>
<comment type="subunit">
    <molecule>Outer capsid protein VP4</molecule>
    <text evidence="1">Homotrimer. VP4 adopts a dimeric appearance above the capsid surface, while forming a trimeric base anchored inside the capsid layer. Only hints of the third molecule are observed above the capsid surface. It probably performs a series of molecular rearrangements during viral entry. Prior to trypsin cleavage, it is flexible. The priming trypsin cleavage triggers its rearrangement into rigid spikes with approximate two-fold symmetry of their protruding parts. After an unknown second triggering event, cleaved VP4 may undergo another rearrangement, in which two VP5* subunits fold back on themselves and join a third subunit to form a tightly associated trimer, shaped like a folded umbrella. Interacts with VP6. Interacts with VP7.</text>
</comment>
<comment type="subunit">
    <molecule>Outer capsid protein VP5*</molecule>
    <text evidence="1">Homotrimer. The trimer is coiled-coil stabilized by its C-terminus, however, its N-terminus, known as antigen domain or 'body', seems to be flexible allowing it to self-associate either as a dimer or a trimer.</text>
</comment>
<comment type="subcellular location">
    <molecule>Outer capsid protein VP4</molecule>
    <subcellularLocation>
        <location evidence="1">Virion</location>
    </subcellularLocation>
    <subcellularLocation>
        <location evidence="1">Host rough endoplasmic reticulum</location>
    </subcellularLocation>
    <subcellularLocation>
        <location evidence="1 2">Host cell membrane</location>
    </subcellularLocation>
    <subcellularLocation>
        <location evidence="1 2">Host cytoplasm</location>
        <location evidence="1 2">Host cytoskeleton</location>
    </subcellularLocation>
    <subcellularLocation>
        <location evidence="1">Host endoplasmic reticulum-Golgi intermediate compartment</location>
    </subcellularLocation>
    <text evidence="1">The outer layer contains 180 copies of VP4, grouped as 60 dimers. Immature double-layered particles assembled in the cytoplasm bud across the membrane of the endoplasmic reticulum, acquiring during this process a transient lipid membrane that is modified with the ER resident viral glycoproteins NSP4 and VP7; these enveloped particles also contain VP4. As the particles move towards the interior of the ER cisternae, the transient lipid membrane and the non-structural protein NSP4 are lost, while the virus surface proteins VP4 and VP7 rearrange to form the outermost virus protein layer, yielding mature infectious triple-layered particles. VP4 also seems to associate with lipid rafts of the host cell membrane probably for the exit of the virus from the infected cell by an alternate pathway.</text>
</comment>
<comment type="subcellular location">
    <molecule>Outer capsid protein VP8*</molecule>
    <subcellularLocation>
        <location evidence="1">Virion</location>
    </subcellularLocation>
    <text evidence="1">Outer capsid protein.</text>
</comment>
<comment type="subcellular location">
    <molecule>Outer capsid protein VP5*</molecule>
    <subcellularLocation>
        <location evidence="1">Virion</location>
    </subcellularLocation>
    <text evidence="1">Outer capsid protein.</text>
</comment>
<comment type="domain">
    <molecule>Outer capsid protein VP4</molecule>
    <text evidence="1">The VP4 spike is divided into a foot, a stalk and body, and a head.</text>
</comment>
<comment type="PTM">
    <molecule>Outer capsid protein VP4</molecule>
    <text evidence="1 4">Proteolytic cleavage by trypsin results in activation of VP4 functions and greatly increases infectivity. The penetration into the host cell is dependent on trypsin treatment of VP4. It produces two peptides, VP5* and VP8* that remain associated with the virion (By similarity). Cleavage of VP4 by trypsin probably occurs in vivo in the lumen of the intestine prior to infection of enterocytes. Trypsin seems to be incorporated into the three-layered viral particles but remains inactive as long as the viral outer capsid is intact and would only be activated upon the solubilization of the latter (PubMed:16227238).</text>
</comment>
<comment type="miscellaneous">
    <text evidence="1">In group A rotaviruses, VP4 defines the P serotype.</text>
</comment>
<comment type="miscellaneous">
    <text evidence="1">Some rotavirus strains are neuraminidase-sensitive and require sialic acid to attach to the cell surface. Some rotavirus strains are integrin-dependent. Some rotavirus strains depend on ganglioside for their entry into the host cell. Hsp70 also seems to be involved in the entry of some strains.</text>
</comment>
<comment type="miscellaneous">
    <text evidence="1 3 5">This strain probably uses sialic acid to attach to the host cell.</text>
</comment>
<comment type="similarity">
    <text evidence="1">Belongs to the rotavirus VP4 family.</text>
</comment>
<protein>
    <recommendedName>
        <fullName evidence="1">Outer capsid protein VP4</fullName>
    </recommendedName>
    <alternativeName>
        <fullName evidence="1">Hemagglutinin</fullName>
    </alternativeName>
    <component>
        <recommendedName>
            <fullName evidence="1">Outer capsid protein VP8*</fullName>
        </recommendedName>
    </component>
    <component>
        <recommendedName>
            <fullName evidence="1">Outer capsid protein VP5*</fullName>
        </recommendedName>
    </component>
</protein>
<organismHost>
    <name type="scientific">Bos taurus</name>
    <name type="common">Bovine</name>
    <dbReference type="NCBI Taxonomy" id="9913"/>
</organismHost>
<sequence length="776" mass="86783">MASLIYRQLLTNSYTVELSDEIQEIGSTKTQDVTVNPGPFAQTNYAPVNWGPGETNDSTTVEPVLDGPYQPTTFNPPVSYWMLLAPTNAGVVVEGTNNTNRWLATILIEPNVQQVERTYTLFGQQVQVTVSNNSQTKWKFVDLSKQTQDGNYSQHGSLLSTPKLYGVMKHGGKIYTYNGETPNATTDYYSTTNFDTVNMTAYCDFYIIPLAQEAKCTKYINNGLPPIQNTRNIVPVSIVSRNIVYTRAQPNQDIVVSKTSLWKEMQYNRDIVIRFKFANSIIKSGGLGYKWSEVSFKPANYQYTYTRDGEEVTAHTTCSVNGINNFNYNGGSLPTDFVISKYEVIKENSFVYIDYWDDSQAFRNMVNVRSLAADLNSVMCTGGDYSFALPLGHYPVMTGGAVSLHSAGVTLSTQFTDFVSLNSLRFRFRLSVEEPPFSILRTRVSGLYGLPAARPNNSQEYYEIAGRFSLISLVPSNDDYQTPIINSVTVRQDLERQLGELRDEFNNLSQQIAMSQLIDLALLPLDMFSMFSGIKSTIDAAKSMATNVMKRFKKSSLANSVSTLTDSLSDAASSISRNASVRSVSSTASAWTEVSNITSDINVTTSSISTQTSTISRRLRLKEMATQTDGMNFDDISAAVLKTKIDKSTQLNTNTLPEIVTEASEKFIPNRAYRVIKDDEVLEASTDGKYFAYKVETFEEIPFDVQKFADLVTDSPVISAIIDFKTLKNLNDNYGISRQQALNLLRSDPRVLREFINQDNPIIRNRIESLIMQCRL</sequence>
<feature type="chain" id="PRO_0000368131" description="Outer capsid protein VP4" evidence="1">
    <location>
        <begin position="1"/>
        <end position="776"/>
    </location>
</feature>
<feature type="chain" id="PRO_0000368132" description="Outer capsid protein VP8*" evidence="1">
    <location>
        <begin position="1"/>
        <end position="231"/>
    </location>
</feature>
<feature type="chain" id="PRO_0000368133" description="Outer capsid protein VP5*" evidence="1">
    <location>
        <begin position="248"/>
        <end position="776"/>
    </location>
</feature>
<feature type="region of interest" description="Spike head" evidence="1">
    <location>
        <begin position="65"/>
        <end position="224"/>
    </location>
</feature>
<feature type="region of interest" description="Spike body and stalk (antigen domain)" evidence="1">
    <location>
        <begin position="248"/>
        <end position="479"/>
    </location>
</feature>
<feature type="region of interest" description="Hydrophobic; possible role in virus entry into host cell" evidence="1">
    <location>
        <begin position="389"/>
        <end position="409"/>
    </location>
</feature>
<feature type="region of interest" description="Spike foot" evidence="1">
    <location>
        <begin position="510"/>
        <end position="776"/>
    </location>
</feature>
<feature type="coiled-coil region" evidence="1">
    <location>
        <begin position="484"/>
        <end position="518"/>
    </location>
</feature>
<feature type="short sequence motif" description="DGE motif; interaction with ITGA2/ITGB1 heterodimer" evidence="1">
    <location>
        <begin position="308"/>
        <end position="310"/>
    </location>
</feature>
<feature type="short sequence motif" description="YGL motif; interaction with ITGA4" evidence="1">
    <location>
        <begin position="448"/>
        <end position="450"/>
    </location>
</feature>
<feature type="short sequence motif" description="KID motif; interaction with HSPA8" evidence="1">
    <location>
        <begin position="644"/>
        <end position="646"/>
    </location>
</feature>
<feature type="site" description="Binding to sialic acid" evidence="1">
    <location>
        <position position="101"/>
    </location>
</feature>
<feature type="site" description="Binding to sialic acid" evidence="1">
    <location>
        <position position="190"/>
    </location>
</feature>
<feature type="site" description="Cleavage" evidence="1">
    <location>
        <begin position="231"/>
        <end position="232"/>
    </location>
</feature>
<feature type="site" description="Cleavage" evidence="1">
    <location>
        <begin position="241"/>
        <end position="242"/>
    </location>
</feature>
<feature type="site" description="Cleavage; associated with enhancement of infectivity" evidence="1">
    <location>
        <begin position="247"/>
        <end position="248"/>
    </location>
</feature>
<feature type="disulfide bond" evidence="1">
    <location>
        <begin position="203"/>
        <end position="216"/>
    </location>
</feature>
<feature type="disulfide bond" evidence="1">
    <location>
        <begin position="318"/>
        <end position="380"/>
    </location>
</feature>
<accession>Q96802</accession>
<keyword id="KW-0167">Capsid protein</keyword>
<keyword id="KW-0175">Coiled coil</keyword>
<keyword id="KW-1015">Disulfide bond</keyword>
<keyword id="KW-0348">Hemagglutinin</keyword>
<keyword id="KW-1032">Host cell membrane</keyword>
<keyword id="KW-1035">Host cytoplasm</keyword>
<keyword id="KW-1037">Host cytoskeleton</keyword>
<keyword id="KW-1038">Host endoplasmic reticulum</keyword>
<keyword id="KW-1043">Host membrane</keyword>
<keyword id="KW-0945">Host-virus interaction</keyword>
<keyword id="KW-0472">Membrane</keyword>
<keyword id="KW-1152">Outer capsid protein</keyword>
<keyword id="KW-1161">Viral attachment to host cell</keyword>
<keyword id="KW-1162">Viral penetration into host cytoplasm</keyword>
<keyword id="KW-1173">Viral penetration via permeabilization of host membrane</keyword>
<keyword id="KW-0946">Virion</keyword>
<keyword id="KW-1160">Virus entry into host cell</keyword>
<evidence type="ECO:0000255" key="1">
    <source>
        <dbReference type="HAMAP-Rule" id="MF_04132"/>
    </source>
</evidence>
<evidence type="ECO:0000269" key="2">
    <source>
    </source>
</evidence>
<evidence type="ECO:0000269" key="3">
    <source>
    </source>
</evidence>
<evidence type="ECO:0000269" key="4">
    <source>
    </source>
</evidence>
<evidence type="ECO:0000303" key="5">
    <source>
    </source>
</evidence>
<reference key="1">
    <citation type="submission" date="1996-08" db="EMBL/GenBank/DDBJ databases">
        <authorList>
            <person name="Bremont M."/>
            <person name="Labbe M."/>
            <person name="Gajardo R."/>
            <person name="Cohen J."/>
        </authorList>
    </citation>
    <scope>NUCLEOTIDE SEQUENCE [MRNA]</scope>
</reference>
<reference key="2">
    <citation type="journal article" date="2000" name="J. Virol.">
        <title>Rotavirus spike protein VP4 is present at the plasma membrane and is associated with microtubules in infected cells.</title>
        <authorList>
            <person name="Nejmeddine M."/>
            <person name="Trugnan G."/>
            <person name="Sapin C."/>
            <person name="Kohli E."/>
            <person name="Svensson L."/>
            <person name="Lopez S."/>
            <person name="Cohen J."/>
        </authorList>
    </citation>
    <scope>SUBCELLULAR LOCATION (OUTER CAPSID PROTEIN VP4)</scope>
</reference>
<reference key="3">
    <citation type="journal article" date="2002" name="J. Virol.">
        <title>Initial interaction of rotavirus strains with N-acetylneuraminic (sialic) acid residues on the cell surface correlates with VP4 genotype, not species of origin.</title>
        <authorList>
            <person name="Ciarlet M."/>
            <person name="Ludert J.E."/>
            <person name="Iturriza-Gomara M."/>
            <person name="Liprandi F."/>
            <person name="Gray J.J."/>
            <person name="Desselberger U."/>
            <person name="Estes M.K."/>
        </authorList>
    </citation>
    <scope>SIALIC ACID DEPENDENCY</scope>
</reference>
<reference key="4">
    <citation type="journal article" date="2005" name="J. Gen. Virol.">
        <title>Trypsin is associated with the rotavirus capsid and is activated by solubilization of outer capsid proteins.</title>
        <authorList>
            <person name="Benureau Y."/>
            <person name="Huet J.C."/>
            <person name="Charpilienne A."/>
            <person name="Poncet D."/>
            <person name="Cohen J."/>
        </authorList>
    </citation>
    <scope>PROTEOLYTIC CLEAVAGE (OUTER CAPSID PROTEIN VP4)</scope>
</reference>
<reference key="5">
    <citation type="journal article" date="2006" name="Glycoconj. J.">
        <title>Role of sialic acids in rotavirus infection.</title>
        <authorList>
            <person name="Isa P."/>
            <person name="Arias C.F."/>
            <person name="Lopez S."/>
        </authorList>
    </citation>
    <scope>REVIEW</scope>
</reference>
<proteinExistence type="evidence at protein level"/>
<organism>
    <name type="scientific">Rotavirus A (strain RVA/Cow/France/RF/1975/G6P6[1])</name>
    <name type="common">RV-A</name>
    <dbReference type="NCBI Taxonomy" id="10933"/>
    <lineage>
        <taxon>Viruses</taxon>
        <taxon>Riboviria</taxon>
        <taxon>Orthornavirae</taxon>
        <taxon>Duplornaviricota</taxon>
        <taxon>Resentoviricetes</taxon>
        <taxon>Reovirales</taxon>
        <taxon>Sedoreoviridae</taxon>
        <taxon>Rotavirus</taxon>
        <taxon>Rotavirus A</taxon>
    </lineage>
</organism>
<dbReference type="EMBL" id="U65924">
    <property type="protein sequence ID" value="AAB07453.1"/>
    <property type="molecule type" value="mRNA"/>
</dbReference>
<dbReference type="PIR" id="S24410">
    <property type="entry name" value="S24410"/>
</dbReference>
<dbReference type="SMR" id="Q96802"/>
<dbReference type="Proteomes" id="UP000007179">
    <property type="component" value="Genome"/>
</dbReference>
<dbReference type="GO" id="GO:0044172">
    <property type="term" value="C:host cell endoplasmic reticulum-Golgi intermediate compartment"/>
    <property type="evidence" value="ECO:0007669"/>
    <property type="project" value="UniProtKB-SubCell"/>
</dbReference>
<dbReference type="GO" id="GO:0020002">
    <property type="term" value="C:host cell plasma membrane"/>
    <property type="evidence" value="ECO:0007669"/>
    <property type="project" value="UniProtKB-SubCell"/>
</dbReference>
<dbReference type="GO" id="GO:0044168">
    <property type="term" value="C:host cell rough endoplasmic reticulum"/>
    <property type="evidence" value="ECO:0007669"/>
    <property type="project" value="UniProtKB-SubCell"/>
</dbReference>
<dbReference type="GO" id="GO:0044163">
    <property type="term" value="C:host cytoskeleton"/>
    <property type="evidence" value="ECO:0007669"/>
    <property type="project" value="UniProtKB-SubCell"/>
</dbReference>
<dbReference type="GO" id="GO:0016020">
    <property type="term" value="C:membrane"/>
    <property type="evidence" value="ECO:0007669"/>
    <property type="project" value="UniProtKB-KW"/>
</dbReference>
<dbReference type="GO" id="GO:0039624">
    <property type="term" value="C:viral outer capsid"/>
    <property type="evidence" value="ECO:0007669"/>
    <property type="project" value="UniProtKB-UniRule"/>
</dbReference>
<dbReference type="GO" id="GO:0039665">
    <property type="term" value="P:permeabilization of host organelle membrane involved in viral entry into host cell"/>
    <property type="evidence" value="ECO:0007669"/>
    <property type="project" value="UniProtKB-UniRule"/>
</dbReference>
<dbReference type="GO" id="GO:0019062">
    <property type="term" value="P:virion attachment to host cell"/>
    <property type="evidence" value="ECO:0007669"/>
    <property type="project" value="UniProtKB-UniRule"/>
</dbReference>
<dbReference type="Gene3D" id="1.20.5.170">
    <property type="match status" value="1"/>
</dbReference>
<dbReference type="Gene3D" id="2.60.120.200">
    <property type="match status" value="1"/>
</dbReference>
<dbReference type="HAMAP" id="MF_04132">
    <property type="entry name" value="Rota_A_VP4"/>
    <property type="match status" value="1"/>
</dbReference>
<dbReference type="HAMAP" id="MF_04125">
    <property type="entry name" value="Rota_VP4"/>
    <property type="match status" value="1"/>
</dbReference>
<dbReference type="InterPro" id="IPR013320">
    <property type="entry name" value="ConA-like_dom_sf"/>
</dbReference>
<dbReference type="InterPro" id="IPR042546">
    <property type="entry name" value="Rota_A_VP4"/>
</dbReference>
<dbReference type="InterPro" id="IPR035330">
    <property type="entry name" value="Rota_VP4_MID"/>
</dbReference>
<dbReference type="InterPro" id="IPR038017">
    <property type="entry name" value="Rota_VP4_MID_sf"/>
</dbReference>
<dbReference type="InterPro" id="IPR000416">
    <property type="entry name" value="VP4_concanavalin-like"/>
</dbReference>
<dbReference type="InterPro" id="IPR035329">
    <property type="entry name" value="VP4_helical"/>
</dbReference>
<dbReference type="Pfam" id="PF17477">
    <property type="entry name" value="Rota_VP4_MID"/>
    <property type="match status" value="1"/>
</dbReference>
<dbReference type="Pfam" id="PF00426">
    <property type="entry name" value="VP4_haemagglut"/>
    <property type="match status" value="1"/>
</dbReference>
<dbReference type="Pfam" id="PF17478">
    <property type="entry name" value="VP4_helical"/>
    <property type="match status" value="1"/>
</dbReference>
<dbReference type="SUPFAM" id="SSF49899">
    <property type="entry name" value="Concanavalin A-like lectins/glucanases"/>
    <property type="match status" value="1"/>
</dbReference>
<dbReference type="SUPFAM" id="SSF111379">
    <property type="entry name" value="VP4 membrane interaction domain"/>
    <property type="match status" value="1"/>
</dbReference>
<name>VP4_ROTRF</name>